<gene>
    <name evidence="1" type="primary">tig</name>
    <name type="ordered locus">CYB_0082</name>
</gene>
<dbReference type="EC" id="5.2.1.8" evidence="1"/>
<dbReference type="EMBL" id="CP000240">
    <property type="protein sequence ID" value="ABD01083.1"/>
    <property type="molecule type" value="Genomic_DNA"/>
</dbReference>
<dbReference type="RefSeq" id="WP_011431754.1">
    <property type="nucleotide sequence ID" value="NC_007776.1"/>
</dbReference>
<dbReference type="SMR" id="Q2JQ33"/>
<dbReference type="STRING" id="321332.CYB_0082"/>
<dbReference type="KEGG" id="cyb:CYB_0082"/>
<dbReference type="eggNOG" id="COG0544">
    <property type="taxonomic scope" value="Bacteria"/>
</dbReference>
<dbReference type="HOGENOM" id="CLU_033058_3_1_3"/>
<dbReference type="OrthoDB" id="9767721at2"/>
<dbReference type="Proteomes" id="UP000001938">
    <property type="component" value="Chromosome"/>
</dbReference>
<dbReference type="GO" id="GO:0005737">
    <property type="term" value="C:cytoplasm"/>
    <property type="evidence" value="ECO:0007669"/>
    <property type="project" value="UniProtKB-SubCell"/>
</dbReference>
<dbReference type="GO" id="GO:0003755">
    <property type="term" value="F:peptidyl-prolyl cis-trans isomerase activity"/>
    <property type="evidence" value="ECO:0007669"/>
    <property type="project" value="UniProtKB-UniRule"/>
</dbReference>
<dbReference type="GO" id="GO:0044183">
    <property type="term" value="F:protein folding chaperone"/>
    <property type="evidence" value="ECO:0007669"/>
    <property type="project" value="TreeGrafter"/>
</dbReference>
<dbReference type="GO" id="GO:0043022">
    <property type="term" value="F:ribosome binding"/>
    <property type="evidence" value="ECO:0007669"/>
    <property type="project" value="TreeGrafter"/>
</dbReference>
<dbReference type="GO" id="GO:0051083">
    <property type="term" value="P:'de novo' cotranslational protein folding"/>
    <property type="evidence" value="ECO:0007669"/>
    <property type="project" value="TreeGrafter"/>
</dbReference>
<dbReference type="GO" id="GO:0051301">
    <property type="term" value="P:cell division"/>
    <property type="evidence" value="ECO:0007669"/>
    <property type="project" value="UniProtKB-KW"/>
</dbReference>
<dbReference type="GO" id="GO:0061077">
    <property type="term" value="P:chaperone-mediated protein folding"/>
    <property type="evidence" value="ECO:0007669"/>
    <property type="project" value="TreeGrafter"/>
</dbReference>
<dbReference type="GO" id="GO:0015031">
    <property type="term" value="P:protein transport"/>
    <property type="evidence" value="ECO:0007669"/>
    <property type="project" value="UniProtKB-UniRule"/>
</dbReference>
<dbReference type="GO" id="GO:0043335">
    <property type="term" value="P:protein unfolding"/>
    <property type="evidence" value="ECO:0007669"/>
    <property type="project" value="TreeGrafter"/>
</dbReference>
<dbReference type="FunFam" id="3.10.50.40:FF:000001">
    <property type="entry name" value="Trigger factor"/>
    <property type="match status" value="1"/>
</dbReference>
<dbReference type="FunFam" id="3.30.70.1050:FF:000004">
    <property type="entry name" value="Trigger factor"/>
    <property type="match status" value="1"/>
</dbReference>
<dbReference type="Gene3D" id="3.10.50.40">
    <property type="match status" value="1"/>
</dbReference>
<dbReference type="Gene3D" id="3.30.70.1050">
    <property type="entry name" value="Trigger factor ribosome-binding domain"/>
    <property type="match status" value="1"/>
</dbReference>
<dbReference type="Gene3D" id="1.10.3120.10">
    <property type="entry name" value="Trigger factor, C-terminal domain"/>
    <property type="match status" value="1"/>
</dbReference>
<dbReference type="HAMAP" id="MF_00303">
    <property type="entry name" value="Trigger_factor_Tig"/>
    <property type="match status" value="1"/>
</dbReference>
<dbReference type="InterPro" id="IPR046357">
    <property type="entry name" value="PPIase_dom_sf"/>
</dbReference>
<dbReference type="InterPro" id="IPR001179">
    <property type="entry name" value="PPIase_FKBP_dom"/>
</dbReference>
<dbReference type="InterPro" id="IPR005215">
    <property type="entry name" value="Trig_fac"/>
</dbReference>
<dbReference type="InterPro" id="IPR008880">
    <property type="entry name" value="Trigger_fac_C"/>
</dbReference>
<dbReference type="InterPro" id="IPR037041">
    <property type="entry name" value="Trigger_fac_C_sf"/>
</dbReference>
<dbReference type="InterPro" id="IPR008881">
    <property type="entry name" value="Trigger_fac_ribosome-bd_bac"/>
</dbReference>
<dbReference type="InterPro" id="IPR036611">
    <property type="entry name" value="Trigger_fac_ribosome-bd_sf"/>
</dbReference>
<dbReference type="InterPro" id="IPR027304">
    <property type="entry name" value="Trigger_fact/SurA_dom_sf"/>
</dbReference>
<dbReference type="NCBIfam" id="TIGR00115">
    <property type="entry name" value="tig"/>
    <property type="match status" value="1"/>
</dbReference>
<dbReference type="PANTHER" id="PTHR30560">
    <property type="entry name" value="TRIGGER FACTOR CHAPERONE AND PEPTIDYL-PROLYL CIS/TRANS ISOMERASE"/>
    <property type="match status" value="1"/>
</dbReference>
<dbReference type="PANTHER" id="PTHR30560:SF3">
    <property type="entry name" value="TRIGGER FACTOR-LIKE PROTEIN TIG, CHLOROPLASTIC"/>
    <property type="match status" value="1"/>
</dbReference>
<dbReference type="Pfam" id="PF00254">
    <property type="entry name" value="FKBP_C"/>
    <property type="match status" value="1"/>
</dbReference>
<dbReference type="Pfam" id="PF05698">
    <property type="entry name" value="Trigger_C"/>
    <property type="match status" value="1"/>
</dbReference>
<dbReference type="Pfam" id="PF05697">
    <property type="entry name" value="Trigger_N"/>
    <property type="match status" value="1"/>
</dbReference>
<dbReference type="SUPFAM" id="SSF54534">
    <property type="entry name" value="FKBP-like"/>
    <property type="match status" value="1"/>
</dbReference>
<dbReference type="SUPFAM" id="SSF109998">
    <property type="entry name" value="Triger factor/SurA peptide-binding domain-like"/>
    <property type="match status" value="1"/>
</dbReference>
<dbReference type="SUPFAM" id="SSF102735">
    <property type="entry name" value="Trigger factor ribosome-binding domain"/>
    <property type="match status" value="1"/>
</dbReference>
<dbReference type="PROSITE" id="PS50059">
    <property type="entry name" value="FKBP_PPIASE"/>
    <property type="match status" value="1"/>
</dbReference>
<keyword id="KW-0131">Cell cycle</keyword>
<keyword id="KW-0132">Cell division</keyword>
<keyword id="KW-0143">Chaperone</keyword>
<keyword id="KW-0963">Cytoplasm</keyword>
<keyword id="KW-0413">Isomerase</keyword>
<keyword id="KW-1185">Reference proteome</keyword>
<keyword id="KW-0697">Rotamase</keyword>
<feature type="chain" id="PRO_0000256633" description="Trigger factor">
    <location>
        <begin position="1"/>
        <end position="556"/>
    </location>
</feature>
<feature type="domain" description="PPIase FKBP-type" evidence="1">
    <location>
        <begin position="169"/>
        <end position="255"/>
    </location>
</feature>
<feature type="region of interest" description="Disordered" evidence="2">
    <location>
        <begin position="438"/>
        <end position="556"/>
    </location>
</feature>
<feature type="compositionally biased region" description="Polar residues" evidence="2">
    <location>
        <begin position="438"/>
        <end position="452"/>
    </location>
</feature>
<feature type="compositionally biased region" description="Acidic residues" evidence="2">
    <location>
        <begin position="461"/>
        <end position="472"/>
    </location>
</feature>
<feature type="compositionally biased region" description="Low complexity" evidence="2">
    <location>
        <begin position="486"/>
        <end position="503"/>
    </location>
</feature>
<feature type="compositionally biased region" description="Low complexity" evidence="2">
    <location>
        <begin position="511"/>
        <end position="526"/>
    </location>
</feature>
<sequence>MQVTQEKRPGSRVGLKIVVEADRVKRSYEKTLRQLEQNIQIPGFRKGKAPRNLVVRQVGRERILASAVDDLINEAIQQAFKEAQLTPISRFELDDEVGQLLAQFNPEADFSFSGYVEVYPEARVGQYKGLTVTATRVDVKPEQIDQLIDRWRDQRATLLPVEDRPAQLGDVVVIDFAARDAEGNPLDEMTTQDFQLELKEDNFIPGFVAGIVGMQLDETKEIAATFPDDYFRKELAGKTVTFIVCLREIKAKELPELDDAFVQEISSFQTVAELREHLQKRLEQDALRQSEENLETAILNAILETTEVDLPETLIEQETTQLLAQSLQALRQEGIKPGELRKFLSELPPETLNQLKERHRPEAIDRLRRTLALSAIVRQEQIAVGSTELDVEVEEVMAAYAQQGQKLDRERVRQAVYESLLTNKVMAWLKSQTTVNWVDSEGNPTQAPTSLAGSEEKVEVPEAEFEADEPEAEVSGIPEAVESSSETATGAETDGEAAAAEAEPATEKAVEASPAETVSASAAEATLPVEEKAAETATEIPAAEKPKPSKKDKKGK</sequence>
<proteinExistence type="inferred from homology"/>
<protein>
    <recommendedName>
        <fullName evidence="1">Trigger factor</fullName>
        <shortName evidence="1">TF</shortName>
        <ecNumber evidence="1">5.2.1.8</ecNumber>
    </recommendedName>
    <alternativeName>
        <fullName evidence="1">PPIase</fullName>
    </alternativeName>
</protein>
<name>TIG_SYNJB</name>
<reference key="1">
    <citation type="journal article" date="2007" name="ISME J.">
        <title>Population level functional diversity in a microbial community revealed by comparative genomic and metagenomic analyses.</title>
        <authorList>
            <person name="Bhaya D."/>
            <person name="Grossman A.R."/>
            <person name="Steunou A.-S."/>
            <person name="Khuri N."/>
            <person name="Cohan F.M."/>
            <person name="Hamamura N."/>
            <person name="Melendrez M.C."/>
            <person name="Bateson M.M."/>
            <person name="Ward D.M."/>
            <person name="Heidelberg J.F."/>
        </authorList>
    </citation>
    <scope>NUCLEOTIDE SEQUENCE [LARGE SCALE GENOMIC DNA]</scope>
    <source>
        <strain>JA-2-3B'a(2-13)</strain>
    </source>
</reference>
<accession>Q2JQ33</accession>
<organism>
    <name type="scientific">Synechococcus sp. (strain JA-2-3B'a(2-13))</name>
    <name type="common">Cyanobacteria bacterium Yellowstone B-Prime</name>
    <dbReference type="NCBI Taxonomy" id="321332"/>
    <lineage>
        <taxon>Bacteria</taxon>
        <taxon>Bacillati</taxon>
        <taxon>Cyanobacteriota</taxon>
        <taxon>Cyanophyceae</taxon>
        <taxon>Synechococcales</taxon>
        <taxon>Synechococcaceae</taxon>
        <taxon>Synechococcus</taxon>
    </lineage>
</organism>
<evidence type="ECO:0000255" key="1">
    <source>
        <dbReference type="HAMAP-Rule" id="MF_00303"/>
    </source>
</evidence>
<evidence type="ECO:0000256" key="2">
    <source>
        <dbReference type="SAM" id="MobiDB-lite"/>
    </source>
</evidence>
<comment type="function">
    <text evidence="1">Involved in protein export. Acts as a chaperone by maintaining the newly synthesized protein in an open conformation. Functions as a peptidyl-prolyl cis-trans isomerase.</text>
</comment>
<comment type="catalytic activity">
    <reaction evidence="1">
        <text>[protein]-peptidylproline (omega=180) = [protein]-peptidylproline (omega=0)</text>
        <dbReference type="Rhea" id="RHEA:16237"/>
        <dbReference type="Rhea" id="RHEA-COMP:10747"/>
        <dbReference type="Rhea" id="RHEA-COMP:10748"/>
        <dbReference type="ChEBI" id="CHEBI:83833"/>
        <dbReference type="ChEBI" id="CHEBI:83834"/>
        <dbReference type="EC" id="5.2.1.8"/>
    </reaction>
</comment>
<comment type="subcellular location">
    <subcellularLocation>
        <location>Cytoplasm</location>
    </subcellularLocation>
    <text evidence="1">About half TF is bound to the ribosome near the polypeptide exit tunnel while the other half is free in the cytoplasm.</text>
</comment>
<comment type="domain">
    <text evidence="1">Consists of 3 domains; the N-terminus binds the ribosome, the middle domain has PPIase activity, while the C-terminus has intrinsic chaperone activity on its own.</text>
</comment>
<comment type="similarity">
    <text evidence="1">Belongs to the FKBP-type PPIase family. Tig subfamily.</text>
</comment>